<feature type="chain" id="PRO_1000142442" description="Large ribosomal subunit protein uL5">
    <location>
        <begin position="1"/>
        <end position="179"/>
    </location>
</feature>
<proteinExistence type="inferred from homology"/>
<gene>
    <name evidence="1" type="primary">rplE</name>
    <name type="ordered locus">SeAg_B3624</name>
</gene>
<sequence length="179" mass="20318">MAKLHDYYKDEVVNKLMTEFNYNSVMQVPRVEKITLNMGVGEAIADKKLLDNAAADLTAISGQKPLITKARKSVAGFKIRQGYPIGCKVTLRGERMWEFFERLITIAVPRIRDFRGLSAKSFDGRGNYSMGVREQIIFPEIDYDKVDRVRGLDITITTTAKSDEEGRALLAAFDFPFRK</sequence>
<reference key="1">
    <citation type="journal article" date="2011" name="J. Bacteriol.">
        <title>Comparative genomics of 28 Salmonella enterica isolates: evidence for CRISPR-mediated adaptive sublineage evolution.</title>
        <authorList>
            <person name="Fricke W.F."/>
            <person name="Mammel M.K."/>
            <person name="McDermott P.F."/>
            <person name="Tartera C."/>
            <person name="White D.G."/>
            <person name="Leclerc J.E."/>
            <person name="Ravel J."/>
            <person name="Cebula T.A."/>
        </authorList>
    </citation>
    <scope>NUCLEOTIDE SEQUENCE [LARGE SCALE GENOMIC DNA]</scope>
    <source>
        <strain>SL483</strain>
    </source>
</reference>
<evidence type="ECO:0000255" key="1">
    <source>
        <dbReference type="HAMAP-Rule" id="MF_01333"/>
    </source>
</evidence>
<evidence type="ECO:0000305" key="2"/>
<accession>B5F7T3</accession>
<organism>
    <name type="scientific">Salmonella agona (strain SL483)</name>
    <dbReference type="NCBI Taxonomy" id="454166"/>
    <lineage>
        <taxon>Bacteria</taxon>
        <taxon>Pseudomonadati</taxon>
        <taxon>Pseudomonadota</taxon>
        <taxon>Gammaproteobacteria</taxon>
        <taxon>Enterobacterales</taxon>
        <taxon>Enterobacteriaceae</taxon>
        <taxon>Salmonella</taxon>
    </lineage>
</organism>
<name>RL5_SALA4</name>
<protein>
    <recommendedName>
        <fullName evidence="1">Large ribosomal subunit protein uL5</fullName>
    </recommendedName>
    <alternativeName>
        <fullName evidence="2">50S ribosomal protein L5</fullName>
    </alternativeName>
</protein>
<dbReference type="EMBL" id="CP001138">
    <property type="protein sequence ID" value="ACH49213.1"/>
    <property type="molecule type" value="Genomic_DNA"/>
</dbReference>
<dbReference type="RefSeq" id="WP_001096206.1">
    <property type="nucleotide sequence ID" value="NC_011149.1"/>
</dbReference>
<dbReference type="SMR" id="B5F7T3"/>
<dbReference type="GeneID" id="93751944"/>
<dbReference type="KEGG" id="sea:SeAg_B3624"/>
<dbReference type="HOGENOM" id="CLU_061015_2_1_6"/>
<dbReference type="Proteomes" id="UP000008819">
    <property type="component" value="Chromosome"/>
</dbReference>
<dbReference type="GO" id="GO:1990904">
    <property type="term" value="C:ribonucleoprotein complex"/>
    <property type="evidence" value="ECO:0007669"/>
    <property type="project" value="UniProtKB-KW"/>
</dbReference>
<dbReference type="GO" id="GO:0005840">
    <property type="term" value="C:ribosome"/>
    <property type="evidence" value="ECO:0007669"/>
    <property type="project" value="UniProtKB-KW"/>
</dbReference>
<dbReference type="GO" id="GO:0019843">
    <property type="term" value="F:rRNA binding"/>
    <property type="evidence" value="ECO:0007669"/>
    <property type="project" value="UniProtKB-UniRule"/>
</dbReference>
<dbReference type="GO" id="GO:0003735">
    <property type="term" value="F:structural constituent of ribosome"/>
    <property type="evidence" value="ECO:0007669"/>
    <property type="project" value="InterPro"/>
</dbReference>
<dbReference type="GO" id="GO:0000049">
    <property type="term" value="F:tRNA binding"/>
    <property type="evidence" value="ECO:0007669"/>
    <property type="project" value="UniProtKB-UniRule"/>
</dbReference>
<dbReference type="GO" id="GO:0006412">
    <property type="term" value="P:translation"/>
    <property type="evidence" value="ECO:0007669"/>
    <property type="project" value="UniProtKB-UniRule"/>
</dbReference>
<dbReference type="FunFam" id="3.30.1440.10:FF:000001">
    <property type="entry name" value="50S ribosomal protein L5"/>
    <property type="match status" value="1"/>
</dbReference>
<dbReference type="Gene3D" id="3.30.1440.10">
    <property type="match status" value="1"/>
</dbReference>
<dbReference type="HAMAP" id="MF_01333_B">
    <property type="entry name" value="Ribosomal_uL5_B"/>
    <property type="match status" value="1"/>
</dbReference>
<dbReference type="InterPro" id="IPR002132">
    <property type="entry name" value="Ribosomal_uL5"/>
</dbReference>
<dbReference type="InterPro" id="IPR020930">
    <property type="entry name" value="Ribosomal_uL5_bac-type"/>
</dbReference>
<dbReference type="InterPro" id="IPR031309">
    <property type="entry name" value="Ribosomal_uL5_C"/>
</dbReference>
<dbReference type="InterPro" id="IPR020929">
    <property type="entry name" value="Ribosomal_uL5_CS"/>
</dbReference>
<dbReference type="InterPro" id="IPR022803">
    <property type="entry name" value="Ribosomal_uL5_dom_sf"/>
</dbReference>
<dbReference type="InterPro" id="IPR031310">
    <property type="entry name" value="Ribosomal_uL5_N"/>
</dbReference>
<dbReference type="NCBIfam" id="NF000585">
    <property type="entry name" value="PRK00010.1"/>
    <property type="match status" value="1"/>
</dbReference>
<dbReference type="PANTHER" id="PTHR11994">
    <property type="entry name" value="60S RIBOSOMAL PROTEIN L11-RELATED"/>
    <property type="match status" value="1"/>
</dbReference>
<dbReference type="Pfam" id="PF00281">
    <property type="entry name" value="Ribosomal_L5"/>
    <property type="match status" value="1"/>
</dbReference>
<dbReference type="Pfam" id="PF00673">
    <property type="entry name" value="Ribosomal_L5_C"/>
    <property type="match status" value="1"/>
</dbReference>
<dbReference type="PIRSF" id="PIRSF002161">
    <property type="entry name" value="Ribosomal_L5"/>
    <property type="match status" value="1"/>
</dbReference>
<dbReference type="SUPFAM" id="SSF55282">
    <property type="entry name" value="RL5-like"/>
    <property type="match status" value="1"/>
</dbReference>
<dbReference type="PROSITE" id="PS00358">
    <property type="entry name" value="RIBOSOMAL_L5"/>
    <property type="match status" value="1"/>
</dbReference>
<keyword id="KW-0687">Ribonucleoprotein</keyword>
<keyword id="KW-0689">Ribosomal protein</keyword>
<keyword id="KW-0694">RNA-binding</keyword>
<keyword id="KW-0699">rRNA-binding</keyword>
<keyword id="KW-0820">tRNA-binding</keyword>
<comment type="function">
    <text evidence="1">This is one of the proteins that bind and probably mediate the attachment of the 5S RNA into the large ribosomal subunit, where it forms part of the central protuberance. In the 70S ribosome it contacts protein S13 of the 30S subunit (bridge B1b), connecting the 2 subunits; this bridge is implicated in subunit movement. Contacts the P site tRNA; the 5S rRNA and some of its associated proteins might help stabilize positioning of ribosome-bound tRNAs.</text>
</comment>
<comment type="subunit">
    <text evidence="1">Part of the 50S ribosomal subunit; part of the 5S rRNA/L5/L18/L25 subcomplex. Contacts the 5S rRNA and the P site tRNA. Forms a bridge to the 30S subunit in the 70S ribosome.</text>
</comment>
<comment type="similarity">
    <text evidence="1">Belongs to the universal ribosomal protein uL5 family.</text>
</comment>